<feature type="chain" id="PRO_0000447196" description="Terminase, small subunit">
    <location>
        <begin position="1"/>
        <end position="171"/>
    </location>
</feature>
<proteinExistence type="inferred from homology"/>
<organism>
    <name type="scientific">Thermus virus P23-45</name>
    <name type="common">Thermus thermophilus phage P23-45</name>
    <dbReference type="NCBI Taxonomy" id="2914006"/>
    <lineage>
        <taxon>Viruses</taxon>
        <taxon>Duplodnaviria</taxon>
        <taxon>Heunggongvirae</taxon>
        <taxon>Uroviricota</taxon>
        <taxon>Caudoviricetes</taxon>
        <taxon>Oshimavirus</taxon>
        <taxon>Oshimavirus P2345</taxon>
    </lineage>
</organism>
<protein>
    <recommendedName>
        <fullName evidence="1">Terminase, small subunit</fullName>
    </recommendedName>
    <alternativeName>
        <fullName evidence="4">DNA-packaging protein gp84</fullName>
    </alternativeName>
    <alternativeName>
        <fullName evidence="4">Gene product 84</fullName>
        <shortName evidence="4">gp84</shortName>
    </alternativeName>
</protein>
<keyword id="KW-0238">DNA-binding</keyword>
<keyword id="KW-1185">Reference proteome</keyword>
<keyword id="KW-0231">Viral genome packaging</keyword>
<keyword id="KW-1188">Viral release from host cell</keyword>
<sequence length="171" mass="18835">MSVSFRDRVLKLYLLGFDPSEIAQTLSLDAKRKVTEEEVLHVLAEARELLSALPSLEDIRAEVGQALERARIFQKDLLAIYQNMLRNYNAMMEGLTEHPDGTPVIGVRPADIAAMADRIMKIDQERITALLNSLKVLGHVGSTTAGALPSATELVRVEELVAEVVDEAPKT</sequence>
<comment type="function">
    <text evidence="2">The terminase small subunit binds to the packaging initiation site and regulates the ATPase activity of the terminase large subunit (By similarity). The terminase lies at a unique vertex of the procapsid and is composed of two subunits, a small terminase subunit involved in viral DNA recognition (packaging sequence), and a large terminase subunit (By similarity). Both terminase subunits heterooligomerize and are docked on the portal protein to form the packaging machine (By similarity).</text>
</comment>
<comment type="subunit">
    <text evidence="1 2">Homononamer; forms a ring-like structure through which genomic DNA is translocated into the capsid (By similarity). Heterodimer with the terminase large subunit; the active complex is probably heterooligomeric (By similarity).</text>
</comment>
<comment type="similarity">
    <text evidence="4">Belongs to the P23virus small terminase family.</text>
</comment>
<dbReference type="EMBL" id="EU100883">
    <property type="protein sequence ID" value="ABU96917.1"/>
    <property type="molecule type" value="Genomic_DNA"/>
</dbReference>
<dbReference type="RefSeq" id="YP_001467937.1">
    <property type="nucleotide sequence ID" value="NC_009803.1"/>
</dbReference>
<dbReference type="SMR" id="A7XXB6"/>
<dbReference type="GeneID" id="5600459"/>
<dbReference type="KEGG" id="vg:5600459"/>
<dbReference type="Proteomes" id="UP000001132">
    <property type="component" value="Genome"/>
</dbReference>
<dbReference type="GO" id="GO:0003677">
    <property type="term" value="F:DNA binding"/>
    <property type="evidence" value="ECO:0007669"/>
    <property type="project" value="UniProtKB-KW"/>
</dbReference>
<dbReference type="InterPro" id="IPR055147">
    <property type="entry name" value="TerS_C"/>
</dbReference>
<dbReference type="InterPro" id="IPR049136">
    <property type="entry name" value="TerS_N"/>
</dbReference>
<dbReference type="Pfam" id="PF22412">
    <property type="entry name" value="TerS_C"/>
    <property type="match status" value="1"/>
</dbReference>
<dbReference type="Pfam" id="PF21434">
    <property type="entry name" value="TerS_N"/>
    <property type="match status" value="1"/>
</dbReference>
<evidence type="ECO:0000250" key="1">
    <source>
        <dbReference type="UniProtKB" id="A0A1L4BKP6"/>
    </source>
</evidence>
<evidence type="ECO:0000250" key="2">
    <source>
        <dbReference type="UniProtKB" id="P04893"/>
    </source>
</evidence>
<evidence type="ECO:0000303" key="3">
    <source>
    </source>
</evidence>
<evidence type="ECO:0000305" key="4"/>
<reference key="1">
    <citation type="journal article" date="2008" name="J. Mol. Biol.">
        <title>Genome comparison and proteomic characterization of Thermus thermophilus bacteriophages P23-45 and P74-26: siphoviruses with triplex-forming sequences and the longest known tails.</title>
        <authorList>
            <person name="Minakhin L."/>
            <person name="Goel M."/>
            <person name="Berdygulova Z."/>
            <person name="Ramanculov E."/>
            <person name="Florens L."/>
            <person name="Glazko G."/>
            <person name="Karamychev V.N."/>
            <person name="Slesarev A.I."/>
            <person name="Kozyavkin S.A."/>
            <person name="Khromov I."/>
            <person name="Ackermann H.W."/>
            <person name="Washburn M."/>
            <person name="Mushegian A."/>
            <person name="Severinov K."/>
        </authorList>
    </citation>
    <scope>NUCLEOTIDE SEQUENCE [GENOMIC DNA]</scope>
</reference>
<name>TERS_BP234</name>
<organismHost>
    <name type="scientific">Thermus thermophilus</name>
    <dbReference type="NCBI Taxonomy" id="274"/>
</organismHost>
<accession>A7XXB6</accession>
<gene>
    <name evidence="3" type="ORF">P23p84</name>
</gene>